<gene>
    <name type="primary">F</name>
</gene>
<organism>
    <name type="scientific">Measles virus (strain Leningrad-16)</name>
    <name type="common">MeV</name>
    <name type="synonym">Subacute sclerose panencephalitis virus</name>
    <dbReference type="NCBI Taxonomy" id="70147"/>
    <lineage>
        <taxon>Viruses</taxon>
        <taxon>Riboviria</taxon>
        <taxon>Orthornavirae</taxon>
        <taxon>Negarnaviricota</taxon>
        <taxon>Haploviricotina</taxon>
        <taxon>Monjiviricetes</taxon>
        <taxon>Mononegavirales</taxon>
        <taxon>Paramyxoviridae</taxon>
        <taxon>Orthoparamyxovirinae</taxon>
        <taxon>Morbillivirus</taxon>
        <taxon>Morbillivirus hominis</taxon>
        <taxon>Measles morbillivirus</taxon>
    </lineage>
</organism>
<proteinExistence type="inferred from homology"/>
<dbReference type="EMBL" id="U03659">
    <property type="protein sequence ID" value="AAA56649.1"/>
    <property type="status" value="ALT_INIT"/>
    <property type="molecule type" value="Genomic_RNA"/>
</dbReference>
<dbReference type="SMR" id="P69356"/>
<dbReference type="GlyCosmos" id="P69356">
    <property type="glycosylation" value="3 sites, No reported glycans"/>
</dbReference>
<dbReference type="GO" id="GO:0020002">
    <property type="term" value="C:host cell plasma membrane"/>
    <property type="evidence" value="ECO:0007669"/>
    <property type="project" value="UniProtKB-SubCell"/>
</dbReference>
<dbReference type="GO" id="GO:0016020">
    <property type="term" value="C:membrane"/>
    <property type="evidence" value="ECO:0007669"/>
    <property type="project" value="UniProtKB-KW"/>
</dbReference>
<dbReference type="GO" id="GO:0019031">
    <property type="term" value="C:viral envelope"/>
    <property type="evidence" value="ECO:0007669"/>
    <property type="project" value="UniProtKB-KW"/>
</dbReference>
<dbReference type="GO" id="GO:0055036">
    <property type="term" value="C:virion membrane"/>
    <property type="evidence" value="ECO:0007669"/>
    <property type="project" value="UniProtKB-SubCell"/>
</dbReference>
<dbReference type="GO" id="GO:0019064">
    <property type="term" value="P:fusion of virus membrane with host plasma membrane"/>
    <property type="evidence" value="ECO:0007669"/>
    <property type="project" value="UniProtKB-KW"/>
</dbReference>
<dbReference type="GO" id="GO:0046718">
    <property type="term" value="P:symbiont entry into host cell"/>
    <property type="evidence" value="ECO:0007669"/>
    <property type="project" value="UniProtKB-KW"/>
</dbReference>
<dbReference type="Gene3D" id="1.10.287.2480">
    <property type="match status" value="1"/>
</dbReference>
<dbReference type="Gene3D" id="6.10.10.110">
    <property type="match status" value="1"/>
</dbReference>
<dbReference type="Gene3D" id="2.60.40.1690">
    <property type="entry name" value="Head and neck region of the ectodomain of NDV fusion glycoprotein"/>
    <property type="match status" value="1"/>
</dbReference>
<dbReference type="Gene3D" id="2.40.490.10">
    <property type="entry name" value="Newcastle disease virus like domain"/>
    <property type="match status" value="1"/>
</dbReference>
<dbReference type="InterPro" id="IPR000776">
    <property type="entry name" value="Fusion_F0_Paramyxovir"/>
</dbReference>
<dbReference type="Pfam" id="PF00523">
    <property type="entry name" value="Fusion_gly"/>
    <property type="match status" value="1"/>
</dbReference>
<dbReference type="SUPFAM" id="SSF69922">
    <property type="entry name" value="Head and neck region of the ectodomain of NDV fusion glycoprotein"/>
    <property type="match status" value="1"/>
</dbReference>
<dbReference type="SUPFAM" id="SSF58069">
    <property type="entry name" value="Virus ectodomain"/>
    <property type="match status" value="1"/>
</dbReference>
<evidence type="ECO:0000250" key="1"/>
<evidence type="ECO:0000250" key="2">
    <source>
        <dbReference type="UniProtKB" id="Q786F3"/>
    </source>
</evidence>
<evidence type="ECO:0000255" key="3"/>
<evidence type="ECO:0000305" key="4"/>
<sequence>MGLKVNVSAIFMAVLLTLQTPTGQIHWGNLSKIGVVGIGSASYKVMTRSSHQSLVIKLMPNITLLNNCTRVEIAEYRRLLRTVLEPIRDALNAMTQNIRPVQSVASSRRHKRFAGVVLAGAALGVATAAQITAGIALHQSMLNSQAIDNLRASLETTNQAIEAIRQAGQEMILAVQGVQDYINNELIPSMNQLSCDLIGQKLGLKLLRYYTEILSLFGPSLRDPISAEISIQALSYALGGDINKVLEKLGYSGGDLLGILESRGIKARITHVDTESYFIVLSIAYPTLSEIKGVIVHRLEGVSYNIGSQEWYTTVPKYVATQGYLISNFDESSCTFMPEGTVCSQNALYPMSPLLQECLRGSTKSCARTLVSGSFGNRFILSQGNLIANCASILCKCYTTGTIINQDPDKILTYIAADHCPVVEVNGVTIQVGSRRYPDAVYLHRIDLGPPISLERLDVGTNLGNAIAKLEDAKELLESSDQILRSMKGLSSTSIVYILIAVCLGGLIGIPALICCCRGRCNKKGEQVGMSRPGLKPDLTGTSKSYVRSL</sequence>
<comment type="function">
    <text evidence="1 2">Class I viral fusion protein. Under the current model, the protein has at least 3 conformational states: pre-fusion native state, pre-hairpin intermediate state, and post-fusion hairpin state. During viral and plasma cell membrane fusion, the heptad repeat (HR) regions assume a trimer-of-hairpins structure, positioning the fusion peptide in close proximity to the C-terminal region of the ectodomain. The formation of this structure appears to drive apposition and subsequent fusion of viral and plasma cell membranes. Directs fusion of viral and cellular membranes leading to delivery of the nucleocapsid into the cytoplasm. This fusion is pH independent and occurs directly at the outer cell membrane. During viral entry or virus-mediated fusion between infected cells and neighboring susceptible cells, the head domain of the H protein initially binds to its receptor and then the stalk region of the H protein transmits the fusion-triggering signal to the F protein (By similarity). Upon HN binding to its cellular receptor, the hydrophobic fusion peptide is unmasked and interacts with the cellular membrane, inducing the fusion between cell and virion membranes. Later in infection, F proteins expressed at the plasma membrane of infected cells could mediate fusion with adjacent cells to form syncytia, a cytopathic effect that could lead to tissue necrosis (By similarity).</text>
</comment>
<comment type="function">
    <text evidence="2">Some hyperfusogenic isolates can induce membrane fusion in SLAM- and nectin-4-negative cells and are linked to fatal subacute sclerosing panencephalitis (SSPE) or measles inclusion body encephalitis (MIBE). The neuropathogenicity is closely associated with enhanced propagation mediated by cell-to-cell fusion in the brain, which is principally regulated by hyperfusogenic mutations of the viral F protein. Cell-to-cell transmission of the virus also occurs with hyperfusogenic isolates.</text>
</comment>
<comment type="subunit">
    <text evidence="2">Homotrimer of disulfide-linked F1-F2.</text>
</comment>
<comment type="subcellular location">
    <subcellularLocation>
        <location evidence="1">Virion membrane</location>
        <topology evidence="1">Single-pass type I membrane protein</topology>
    </subcellularLocation>
    <subcellularLocation>
        <location evidence="1">Host cell membrane</location>
        <topology evidence="1">Single-pass membrane protein</topology>
    </subcellularLocation>
</comment>
<comment type="domain">
    <text evidence="2">Contains 3 heptad repreat regions, HRA, HRB and HRC.</text>
</comment>
<comment type="PTM">
    <text evidence="2">The inactive precursor F0 is glycosylated and proteolytically cleaved into F1 and F2 to be functionally active. The cleavage is mediated by host furin during the transport and maturation of the polypeptide.</text>
</comment>
<comment type="similarity">
    <text evidence="4">Belongs to the paramyxoviruses fusion glycoprotein family.</text>
</comment>
<comment type="sequence caution" evidence="4">
    <conflict type="erroneous initiation">
        <sequence resource="EMBL-CDS" id="AAA56649"/>
    </conflict>
</comment>
<accession>P69356</accession>
<accession>P08300</accession>
<organismHost>
    <name type="scientific">Homo sapiens</name>
    <name type="common">Human</name>
    <dbReference type="NCBI Taxonomy" id="9606"/>
</organismHost>
<name>FUS_MEASL</name>
<feature type="signal peptide" evidence="3">
    <location>
        <begin position="1"/>
        <end position="23"/>
    </location>
</feature>
<feature type="chain" id="PRO_0000039267" description="Fusion glycoprotein F0">
    <location>
        <begin position="24"/>
        <end position="550"/>
    </location>
</feature>
<feature type="chain" id="PRO_0000039268" description="Fusion glycoprotein F2">
    <location>
        <begin position="24"/>
        <end position="112"/>
    </location>
</feature>
<feature type="chain" id="PRO_0000039269" description="Fusion glycoprotein F1">
    <location>
        <begin position="113"/>
        <end position="550"/>
    </location>
</feature>
<feature type="topological domain" description="Extracellular" evidence="1">
    <location>
        <begin position="24"/>
        <end position="487"/>
    </location>
</feature>
<feature type="transmembrane region" description="Helical" evidence="3">
    <location>
        <begin position="488"/>
        <end position="518"/>
    </location>
</feature>
<feature type="topological domain" description="Cytoplasmic" evidence="1">
    <location>
        <begin position="519"/>
        <end position="550"/>
    </location>
</feature>
<feature type="region of interest" description="HRC" evidence="2">
    <location>
        <begin position="69"/>
        <end position="95"/>
    </location>
</feature>
<feature type="region of interest" description="Fusion peptide" evidence="2">
    <location>
        <begin position="113"/>
        <end position="138"/>
    </location>
</feature>
<feature type="region of interest" description="HRA" evidence="2">
    <location>
        <begin position="139"/>
        <end position="215"/>
    </location>
</feature>
<feature type="region of interest" description="Interaction with hemagglutinin" evidence="2">
    <location>
        <begin position="367"/>
        <end position="444"/>
    </location>
</feature>
<feature type="region of interest" description="HRB" evidence="2">
    <location>
        <begin position="445"/>
        <end position="494"/>
    </location>
</feature>
<feature type="coiled-coil region" evidence="3">
    <location>
        <begin position="138"/>
        <end position="166"/>
    </location>
</feature>
<feature type="coiled-coil region" evidence="3">
    <location>
        <begin position="462"/>
        <end position="487"/>
    </location>
</feature>
<feature type="site" description="Cleavage; by host" evidence="1">
    <location>
        <begin position="112"/>
        <end position="113"/>
    </location>
</feature>
<feature type="glycosylation site" description="N-linked (GlcNAc...) asparagine; by host" evidence="3">
    <location>
        <position position="29"/>
    </location>
</feature>
<feature type="glycosylation site" description="N-linked (GlcNAc...) asparagine; by host" evidence="3">
    <location>
        <position position="61"/>
    </location>
</feature>
<feature type="glycosylation site" description="N-linked (GlcNAc...) asparagine; by host" evidence="3">
    <location>
        <position position="67"/>
    </location>
</feature>
<feature type="disulfide bond" description="Interchain (with C-195)" evidence="2">
    <location>
        <position position="68"/>
    </location>
</feature>
<feature type="disulfide bond" description="Interchain (with C-68)" evidence="2">
    <location>
        <position position="195"/>
    </location>
</feature>
<feature type="disulfide bond" evidence="2">
    <location>
        <begin position="334"/>
        <end position="343"/>
    </location>
</feature>
<feature type="disulfide bond" evidence="2">
    <location>
        <begin position="358"/>
        <end position="366"/>
    </location>
</feature>
<feature type="disulfide bond" evidence="2">
    <location>
        <begin position="390"/>
        <end position="395"/>
    </location>
</feature>
<feature type="disulfide bond" evidence="2">
    <location>
        <begin position="397"/>
        <end position="420"/>
    </location>
</feature>
<keyword id="KW-0165">Cleavage on pair of basic residues</keyword>
<keyword id="KW-0175">Coiled coil</keyword>
<keyword id="KW-1015">Disulfide bond</keyword>
<keyword id="KW-1169">Fusion of virus membrane with host cell membrane</keyword>
<keyword id="KW-1168">Fusion of virus membrane with host membrane</keyword>
<keyword id="KW-0325">Glycoprotein</keyword>
<keyword id="KW-1032">Host cell membrane</keyword>
<keyword id="KW-1043">Host membrane</keyword>
<keyword id="KW-0472">Membrane</keyword>
<keyword id="KW-0732">Signal</keyword>
<keyword id="KW-0812">Transmembrane</keyword>
<keyword id="KW-1133">Transmembrane helix</keyword>
<keyword id="KW-0261">Viral envelope protein</keyword>
<keyword id="KW-1162">Viral penetration into host cytoplasm</keyword>
<keyword id="KW-0946">Virion</keyword>
<keyword id="KW-1160">Virus entry into host cell</keyword>
<reference key="1">
    <citation type="journal article" date="1994" name="Virus Res.">
        <title>Comparison of sequences of the H, F, and N coding genes of measles virus vaccine strains.</title>
        <authorList>
            <person name="Rota J.S."/>
            <person name="Wang Z.D."/>
            <person name="Rota P.A."/>
            <person name="Bellini W.J."/>
        </authorList>
    </citation>
    <scope>NUCLEOTIDE SEQUENCE [GENOMIC RNA]</scope>
</reference>
<protein>
    <recommendedName>
        <fullName>Fusion glycoprotein F0</fullName>
    </recommendedName>
    <component>
        <recommendedName>
            <fullName>Fusion glycoprotein F2</fullName>
        </recommendedName>
    </component>
    <component>
        <recommendedName>
            <fullName>Fusion glycoprotein F1</fullName>
        </recommendedName>
    </component>
</protein>